<keyword id="KW-1185">Reference proteome</keyword>
<keyword id="KW-0687">Ribonucleoprotein</keyword>
<keyword id="KW-0689">Ribosomal protein</keyword>
<keyword id="KW-0694">RNA-binding</keyword>
<keyword id="KW-0699">rRNA-binding</keyword>
<evidence type="ECO:0000255" key="1">
    <source>
        <dbReference type="HAMAP-Rule" id="MF_00503"/>
    </source>
</evidence>
<evidence type="ECO:0000305" key="2"/>
<feature type="chain" id="PRO_1000014738" description="Large ribosomal subunit protein bL9">
    <location>
        <begin position="1"/>
        <end position="151"/>
    </location>
</feature>
<gene>
    <name evidence="1" type="primary">rplI</name>
    <name type="ordered locus">azo0721</name>
</gene>
<name>RL9_AZOSB</name>
<sequence>MQIILLEKVVNLGNLGDVVKVKDGYARNFLIPQGKAKRANQANLAEFEARRAELERQQAEKLAAAQEVGAKLEGLMVQIARKAGMDGRLFGSVTNADVAEALAAQGFEIERSTVRMPDGPLKQIGDTQLEVALHSDVVVSITVSVLGEQQQ</sequence>
<reference key="1">
    <citation type="journal article" date="2006" name="Nat. Biotechnol.">
        <title>Complete genome of the mutualistic, N2-fixing grass endophyte Azoarcus sp. strain BH72.</title>
        <authorList>
            <person name="Krause A."/>
            <person name="Ramakumar A."/>
            <person name="Bartels D."/>
            <person name="Battistoni F."/>
            <person name="Bekel T."/>
            <person name="Boch J."/>
            <person name="Boehm M."/>
            <person name="Friedrich F."/>
            <person name="Hurek T."/>
            <person name="Krause L."/>
            <person name="Linke B."/>
            <person name="McHardy A.C."/>
            <person name="Sarkar A."/>
            <person name="Schneiker S."/>
            <person name="Syed A.A."/>
            <person name="Thauer R."/>
            <person name="Vorhoelter F.-J."/>
            <person name="Weidner S."/>
            <person name="Puehler A."/>
            <person name="Reinhold-Hurek B."/>
            <person name="Kaiser O."/>
            <person name="Goesmann A."/>
        </authorList>
    </citation>
    <scope>NUCLEOTIDE SEQUENCE [LARGE SCALE GENOMIC DNA]</scope>
    <source>
        <strain>BH72</strain>
    </source>
</reference>
<proteinExistence type="inferred from homology"/>
<accession>A1K3D3</accession>
<organism>
    <name type="scientific">Azoarcus sp. (strain BH72)</name>
    <dbReference type="NCBI Taxonomy" id="418699"/>
    <lineage>
        <taxon>Bacteria</taxon>
        <taxon>Pseudomonadati</taxon>
        <taxon>Pseudomonadota</taxon>
        <taxon>Betaproteobacteria</taxon>
        <taxon>Rhodocyclales</taxon>
        <taxon>Zoogloeaceae</taxon>
        <taxon>Azoarcus</taxon>
    </lineage>
</organism>
<comment type="function">
    <text evidence="1">Binds to the 23S rRNA.</text>
</comment>
<comment type="similarity">
    <text evidence="1">Belongs to the bacterial ribosomal protein bL9 family.</text>
</comment>
<dbReference type="EMBL" id="AM406670">
    <property type="protein sequence ID" value="CAL93338.1"/>
    <property type="molecule type" value="Genomic_DNA"/>
</dbReference>
<dbReference type="RefSeq" id="WP_011764455.1">
    <property type="nucleotide sequence ID" value="NC_008702.1"/>
</dbReference>
<dbReference type="SMR" id="A1K3D3"/>
<dbReference type="STRING" id="62928.azo0721"/>
<dbReference type="KEGG" id="aoa:dqs_0790"/>
<dbReference type="KEGG" id="azo:azo0721"/>
<dbReference type="eggNOG" id="COG0359">
    <property type="taxonomic scope" value="Bacteria"/>
</dbReference>
<dbReference type="HOGENOM" id="CLU_078938_4_1_4"/>
<dbReference type="OrthoDB" id="9788336at2"/>
<dbReference type="Proteomes" id="UP000002588">
    <property type="component" value="Chromosome"/>
</dbReference>
<dbReference type="GO" id="GO:1990904">
    <property type="term" value="C:ribonucleoprotein complex"/>
    <property type="evidence" value="ECO:0007669"/>
    <property type="project" value="UniProtKB-KW"/>
</dbReference>
<dbReference type="GO" id="GO:0005840">
    <property type="term" value="C:ribosome"/>
    <property type="evidence" value="ECO:0007669"/>
    <property type="project" value="UniProtKB-KW"/>
</dbReference>
<dbReference type="GO" id="GO:0019843">
    <property type="term" value="F:rRNA binding"/>
    <property type="evidence" value="ECO:0007669"/>
    <property type="project" value="UniProtKB-UniRule"/>
</dbReference>
<dbReference type="GO" id="GO:0003735">
    <property type="term" value="F:structural constituent of ribosome"/>
    <property type="evidence" value="ECO:0007669"/>
    <property type="project" value="InterPro"/>
</dbReference>
<dbReference type="GO" id="GO:0006412">
    <property type="term" value="P:translation"/>
    <property type="evidence" value="ECO:0007669"/>
    <property type="project" value="UniProtKB-UniRule"/>
</dbReference>
<dbReference type="Gene3D" id="3.10.430.100">
    <property type="entry name" value="Ribosomal protein L9, C-terminal domain"/>
    <property type="match status" value="1"/>
</dbReference>
<dbReference type="Gene3D" id="3.40.5.10">
    <property type="entry name" value="Ribosomal protein L9, N-terminal domain"/>
    <property type="match status" value="1"/>
</dbReference>
<dbReference type="HAMAP" id="MF_00503">
    <property type="entry name" value="Ribosomal_bL9"/>
    <property type="match status" value="1"/>
</dbReference>
<dbReference type="InterPro" id="IPR000244">
    <property type="entry name" value="Ribosomal_bL9"/>
</dbReference>
<dbReference type="InterPro" id="IPR009027">
    <property type="entry name" value="Ribosomal_bL9/RNase_H1_N"/>
</dbReference>
<dbReference type="InterPro" id="IPR020594">
    <property type="entry name" value="Ribosomal_bL9_bac/chp"/>
</dbReference>
<dbReference type="InterPro" id="IPR020069">
    <property type="entry name" value="Ribosomal_bL9_C"/>
</dbReference>
<dbReference type="InterPro" id="IPR036791">
    <property type="entry name" value="Ribosomal_bL9_C_sf"/>
</dbReference>
<dbReference type="InterPro" id="IPR020070">
    <property type="entry name" value="Ribosomal_bL9_N"/>
</dbReference>
<dbReference type="InterPro" id="IPR036935">
    <property type="entry name" value="Ribosomal_bL9_N_sf"/>
</dbReference>
<dbReference type="NCBIfam" id="TIGR00158">
    <property type="entry name" value="L9"/>
    <property type="match status" value="1"/>
</dbReference>
<dbReference type="PANTHER" id="PTHR21368">
    <property type="entry name" value="50S RIBOSOMAL PROTEIN L9"/>
    <property type="match status" value="1"/>
</dbReference>
<dbReference type="Pfam" id="PF03948">
    <property type="entry name" value="Ribosomal_L9_C"/>
    <property type="match status" value="1"/>
</dbReference>
<dbReference type="Pfam" id="PF01281">
    <property type="entry name" value="Ribosomal_L9_N"/>
    <property type="match status" value="1"/>
</dbReference>
<dbReference type="SUPFAM" id="SSF55658">
    <property type="entry name" value="L9 N-domain-like"/>
    <property type="match status" value="1"/>
</dbReference>
<dbReference type="SUPFAM" id="SSF55653">
    <property type="entry name" value="Ribosomal protein L9 C-domain"/>
    <property type="match status" value="1"/>
</dbReference>
<dbReference type="PROSITE" id="PS00651">
    <property type="entry name" value="RIBOSOMAL_L9"/>
    <property type="match status" value="1"/>
</dbReference>
<protein>
    <recommendedName>
        <fullName evidence="1">Large ribosomal subunit protein bL9</fullName>
    </recommendedName>
    <alternativeName>
        <fullName evidence="2">50S ribosomal protein L9</fullName>
    </alternativeName>
</protein>